<keyword id="KW-0539">Nucleus</keyword>
<keyword id="KW-1185">Reference proteome</keyword>
<keyword id="KW-0804">Transcription</keyword>
<keyword id="KW-0805">Transcription regulation</keyword>
<evidence type="ECO:0000250" key="1"/>
<evidence type="ECO:0000255" key="2">
    <source>
        <dbReference type="PROSITE-ProRule" id="PRU01191"/>
    </source>
</evidence>
<evidence type="ECO:0000256" key="3">
    <source>
        <dbReference type="SAM" id="MobiDB-lite"/>
    </source>
</evidence>
<evidence type="ECO:0000269" key="4">
    <source>
    </source>
</evidence>
<evidence type="ECO:0000269" key="5">
    <source>
    </source>
</evidence>
<evidence type="ECO:0000305" key="6"/>
<reference key="1">
    <citation type="journal article" date="1999" name="Plant J.">
        <title>The GRAS gene family in Arabidopsis: sequence characterization and basic expression analysis of the SCARECROW-LIKE genes.</title>
        <authorList>
            <person name="Pysh L.D."/>
            <person name="Wysocka-Diller J.W."/>
            <person name="Camilleri C."/>
            <person name="Bouchez D."/>
            <person name="Benfey P.N."/>
        </authorList>
    </citation>
    <scope>NUCLEOTIDE SEQUENCE [MRNA]</scope>
    <scope>TISSUE SPECIFICITY</scope>
</reference>
<reference key="2">
    <citation type="journal article" date="2000" name="Nature">
        <title>Sequence and analysis of chromosome 1 of the plant Arabidopsis thaliana.</title>
        <authorList>
            <person name="Theologis A."/>
            <person name="Ecker J.R."/>
            <person name="Palm C.J."/>
            <person name="Federspiel N.A."/>
            <person name="Kaul S."/>
            <person name="White O."/>
            <person name="Alonso J."/>
            <person name="Altafi H."/>
            <person name="Araujo R."/>
            <person name="Bowman C.L."/>
            <person name="Brooks S.Y."/>
            <person name="Buehler E."/>
            <person name="Chan A."/>
            <person name="Chao Q."/>
            <person name="Chen H."/>
            <person name="Cheuk R.F."/>
            <person name="Chin C.W."/>
            <person name="Chung M.K."/>
            <person name="Conn L."/>
            <person name="Conway A.B."/>
            <person name="Conway A.R."/>
            <person name="Creasy T.H."/>
            <person name="Dewar K."/>
            <person name="Dunn P."/>
            <person name="Etgu P."/>
            <person name="Feldblyum T.V."/>
            <person name="Feng J.-D."/>
            <person name="Fong B."/>
            <person name="Fujii C.Y."/>
            <person name="Gill J.E."/>
            <person name="Goldsmith A.D."/>
            <person name="Haas B."/>
            <person name="Hansen N.F."/>
            <person name="Hughes B."/>
            <person name="Huizar L."/>
            <person name="Hunter J.L."/>
            <person name="Jenkins J."/>
            <person name="Johnson-Hopson C."/>
            <person name="Khan S."/>
            <person name="Khaykin E."/>
            <person name="Kim C.J."/>
            <person name="Koo H.L."/>
            <person name="Kremenetskaia I."/>
            <person name="Kurtz D.B."/>
            <person name="Kwan A."/>
            <person name="Lam B."/>
            <person name="Langin-Hooper S."/>
            <person name="Lee A."/>
            <person name="Lee J.M."/>
            <person name="Lenz C.A."/>
            <person name="Li J.H."/>
            <person name="Li Y.-P."/>
            <person name="Lin X."/>
            <person name="Liu S.X."/>
            <person name="Liu Z.A."/>
            <person name="Luros J.S."/>
            <person name="Maiti R."/>
            <person name="Marziali A."/>
            <person name="Militscher J."/>
            <person name="Miranda M."/>
            <person name="Nguyen M."/>
            <person name="Nierman W.C."/>
            <person name="Osborne B.I."/>
            <person name="Pai G."/>
            <person name="Peterson J."/>
            <person name="Pham P.K."/>
            <person name="Rizzo M."/>
            <person name="Rooney T."/>
            <person name="Rowley D."/>
            <person name="Sakano H."/>
            <person name="Salzberg S.L."/>
            <person name="Schwartz J.R."/>
            <person name="Shinn P."/>
            <person name="Southwick A.M."/>
            <person name="Sun H."/>
            <person name="Tallon L.J."/>
            <person name="Tambunga G."/>
            <person name="Toriumi M.J."/>
            <person name="Town C.D."/>
            <person name="Utterback T."/>
            <person name="Van Aken S."/>
            <person name="Vaysberg M."/>
            <person name="Vysotskaia V.S."/>
            <person name="Walker M."/>
            <person name="Wu D."/>
            <person name="Yu G."/>
            <person name="Fraser C.M."/>
            <person name="Venter J.C."/>
            <person name="Davis R.W."/>
        </authorList>
    </citation>
    <scope>NUCLEOTIDE SEQUENCE [LARGE SCALE GENOMIC DNA]</scope>
    <source>
        <strain>cv. Columbia</strain>
    </source>
</reference>
<reference key="3">
    <citation type="journal article" date="2017" name="Plant J.">
        <title>Araport11: a complete reannotation of the Arabidopsis thaliana reference genome.</title>
        <authorList>
            <person name="Cheng C.Y."/>
            <person name="Krishnakumar V."/>
            <person name="Chan A.P."/>
            <person name="Thibaud-Nissen F."/>
            <person name="Schobel S."/>
            <person name="Town C.D."/>
        </authorList>
    </citation>
    <scope>GENOME REANNOTATION</scope>
    <source>
        <strain>cv. Columbia</strain>
    </source>
</reference>
<reference key="4">
    <citation type="journal article" date="2004" name="Plant Mol. Biol.">
        <title>Genome-wide analysis of the GRAS gene family in rice and Arabidopsis.</title>
        <authorList>
            <person name="Tian C."/>
            <person name="Wan P."/>
            <person name="Sun S."/>
            <person name="Li J."/>
            <person name="Chen M."/>
        </authorList>
    </citation>
    <scope>GENE FAMILY</scope>
</reference>
<reference key="5">
    <citation type="journal article" date="2008" name="Plant Mol. Biol.">
        <title>Large-scale analysis of the GRAS gene family in Arabidopsis thaliana.</title>
        <authorList>
            <person name="Lee M.-H."/>
            <person name="Kim B."/>
            <person name="Song S.-K."/>
            <person name="Heo J.-O."/>
            <person name="Yu N.-I."/>
            <person name="Lee S.A."/>
            <person name="Kim M."/>
            <person name="Kim D.G."/>
            <person name="Sohn S.O."/>
            <person name="Lim C.E."/>
            <person name="Chang K.S."/>
            <person name="Lee M.M."/>
            <person name="Lim J."/>
        </authorList>
    </citation>
    <scope>GENE FAMILY</scope>
    <scope>SUBCELLULAR LOCATION</scope>
    <scope>TISSUE SPECIFICITY</scope>
</reference>
<comment type="function">
    <text evidence="1">Probable transcription factor involved in plant development.</text>
</comment>
<comment type="interaction">
    <interactant intactId="EBI-25523217">
        <id>Q9XE58</id>
    </interactant>
    <interactant intactId="EBI-541321">
        <id>Q39140</id>
        <label>TGA6</label>
    </interactant>
    <organismsDiffer>false</organismsDiffer>
    <experiments>3</experiments>
</comment>
<comment type="subcellular location">
    <subcellularLocation>
        <location evidence="5">Nucleus</location>
    </subcellularLocation>
</comment>
<comment type="tissue specificity">
    <text evidence="4 5">Expressed in roots, shoots, flowers and siliques.</text>
</comment>
<comment type="similarity">
    <text evidence="6">Belongs to the GRAS family.</text>
</comment>
<comment type="sequence caution" evidence="6">
    <conflict type="frameshift">
        <sequence resource="EMBL-CDS" id="AAD24412"/>
    </conflict>
</comment>
<comment type="sequence caution" evidence="6">
    <conflict type="erroneous gene model prediction">
        <sequence resource="EMBL-CDS" id="AAF79548"/>
    </conflict>
    <text>The predicted gene has been split into 2 genes: At1g07520 and At1g07530.</text>
</comment>
<gene>
    <name type="primary">SCL14</name>
    <name type="ordered locus">At1g07530</name>
    <name type="ORF">F22G5.9</name>
</gene>
<proteinExistence type="evidence at protein level"/>
<dbReference type="EMBL" id="AF036309">
    <property type="protein sequence ID" value="AAD24412.1"/>
    <property type="status" value="ALT_SEQ"/>
    <property type="molecule type" value="mRNA"/>
</dbReference>
<dbReference type="EMBL" id="AC022464">
    <property type="protein sequence ID" value="AAF79548.1"/>
    <property type="status" value="ALT_SEQ"/>
    <property type="molecule type" value="Genomic_DNA"/>
</dbReference>
<dbReference type="EMBL" id="CP002684">
    <property type="protein sequence ID" value="AEE28139.1"/>
    <property type="molecule type" value="Genomic_DNA"/>
</dbReference>
<dbReference type="PIR" id="T51232">
    <property type="entry name" value="T51232"/>
</dbReference>
<dbReference type="RefSeq" id="NP_172233.1">
    <property type="nucleotide sequence ID" value="NM_100627.5"/>
</dbReference>
<dbReference type="SMR" id="Q9XE58"/>
<dbReference type="BioGRID" id="22508">
    <property type="interactions" value="4"/>
</dbReference>
<dbReference type="FunCoup" id="Q9XE58">
    <property type="interactions" value="1502"/>
</dbReference>
<dbReference type="IntAct" id="Q9XE58">
    <property type="interactions" value="1"/>
</dbReference>
<dbReference type="STRING" id="3702.Q9XE58"/>
<dbReference type="iPTMnet" id="Q9XE58"/>
<dbReference type="PaxDb" id="3702-AT1G07530.1"/>
<dbReference type="ProteomicsDB" id="226598"/>
<dbReference type="EnsemblPlants" id="AT1G07530.1">
    <property type="protein sequence ID" value="AT1G07530.1"/>
    <property type="gene ID" value="AT1G07530"/>
</dbReference>
<dbReference type="GeneID" id="837267"/>
<dbReference type="Gramene" id="AT1G07530.1">
    <property type="protein sequence ID" value="AT1G07530.1"/>
    <property type="gene ID" value="AT1G07530"/>
</dbReference>
<dbReference type="KEGG" id="ath:AT1G07530"/>
<dbReference type="Araport" id="AT1G07530"/>
<dbReference type="TAIR" id="AT1G07530">
    <property type="gene designation" value="SCL14"/>
</dbReference>
<dbReference type="eggNOG" id="ENOG502QSQ6">
    <property type="taxonomic scope" value="Eukaryota"/>
</dbReference>
<dbReference type="HOGENOM" id="CLU_011924_2_2_1"/>
<dbReference type="InParanoid" id="Q9XE58"/>
<dbReference type="OMA" id="IIFANHM"/>
<dbReference type="OrthoDB" id="47276at2759"/>
<dbReference type="PhylomeDB" id="Q9XE58"/>
<dbReference type="PRO" id="PR:Q9XE58"/>
<dbReference type="Proteomes" id="UP000006548">
    <property type="component" value="Chromosome 1"/>
</dbReference>
<dbReference type="ExpressionAtlas" id="Q9XE58">
    <property type="expression patterns" value="baseline and differential"/>
</dbReference>
<dbReference type="GO" id="GO:0005829">
    <property type="term" value="C:cytosol"/>
    <property type="evidence" value="ECO:0000314"/>
    <property type="project" value="TAIR"/>
</dbReference>
<dbReference type="GO" id="GO:0005634">
    <property type="term" value="C:nucleus"/>
    <property type="evidence" value="ECO:0000314"/>
    <property type="project" value="TAIR"/>
</dbReference>
<dbReference type="GO" id="GO:0003700">
    <property type="term" value="F:DNA-binding transcription factor activity"/>
    <property type="evidence" value="ECO:0000250"/>
    <property type="project" value="TAIR"/>
</dbReference>
<dbReference type="GO" id="GO:0000976">
    <property type="term" value="F:transcription cis-regulatory region binding"/>
    <property type="evidence" value="ECO:0000353"/>
    <property type="project" value="TAIR"/>
</dbReference>
<dbReference type="GO" id="GO:0045893">
    <property type="term" value="P:positive regulation of DNA-templated transcription"/>
    <property type="evidence" value="ECO:0000315"/>
    <property type="project" value="TAIR"/>
</dbReference>
<dbReference type="GO" id="GO:0006355">
    <property type="term" value="P:regulation of DNA-templated transcription"/>
    <property type="evidence" value="ECO:0000304"/>
    <property type="project" value="TAIR"/>
</dbReference>
<dbReference type="GO" id="GO:0080183">
    <property type="term" value="P:response to photooxidative stress"/>
    <property type="evidence" value="ECO:0000315"/>
    <property type="project" value="TAIR"/>
</dbReference>
<dbReference type="GO" id="GO:0009410">
    <property type="term" value="P:response to xenobiotic stimulus"/>
    <property type="evidence" value="ECO:0000315"/>
    <property type="project" value="TAIR"/>
</dbReference>
<dbReference type="InterPro" id="IPR005202">
    <property type="entry name" value="TF_GRAS"/>
</dbReference>
<dbReference type="PANTHER" id="PTHR31636">
    <property type="entry name" value="OSJNBA0084A10.13 PROTEIN-RELATED"/>
    <property type="match status" value="1"/>
</dbReference>
<dbReference type="Pfam" id="PF03514">
    <property type="entry name" value="GRAS"/>
    <property type="match status" value="1"/>
</dbReference>
<dbReference type="PROSITE" id="PS50985">
    <property type="entry name" value="GRAS"/>
    <property type="match status" value="1"/>
</dbReference>
<name>SCL14_ARATH</name>
<protein>
    <recommendedName>
        <fullName>Scarecrow-like protein 14</fullName>
        <shortName>AtSCL14</shortName>
    </recommendedName>
    <alternativeName>
        <fullName>GRAS family protein 2</fullName>
        <shortName>AtGRAS-2</shortName>
    </alternativeName>
</protein>
<organism>
    <name type="scientific">Arabidopsis thaliana</name>
    <name type="common">Mouse-ear cress</name>
    <dbReference type="NCBI Taxonomy" id="3702"/>
    <lineage>
        <taxon>Eukaryota</taxon>
        <taxon>Viridiplantae</taxon>
        <taxon>Streptophyta</taxon>
        <taxon>Embryophyta</taxon>
        <taxon>Tracheophyta</taxon>
        <taxon>Spermatophyta</taxon>
        <taxon>Magnoliopsida</taxon>
        <taxon>eudicotyledons</taxon>
        <taxon>Gunneridae</taxon>
        <taxon>Pentapetalae</taxon>
        <taxon>rosids</taxon>
        <taxon>malvids</taxon>
        <taxon>Brassicales</taxon>
        <taxon>Brassicaceae</taxon>
        <taxon>Camelineae</taxon>
        <taxon>Arabidopsis</taxon>
    </lineage>
</organism>
<sequence length="769" mass="85929">MGSYPDGFPGSMDELDFNKDFDLPPSSNQTLGLANGFYLDDLDFSSLDPPEAYPSQNNNNNNINNKAVAGDLLSSSSDDADFSDSVLKYISQVLMEEDMEEKPCMFHDALALQAAEKSLYEALGEKYPSSSSASSVDHPERLASDSPDGSCSGGAFSDYASTTTTTSSDSHWSVDGLENRPSWLHTPMPSNFVFQSTSRSNSVTGGGGGGNSAVYGSGFGDDLVSNMFKDDELAMQFKKGVEEASKFLPKSSQLFIDVDSYIPMNSGSKENGSEVFVKTEKKDETEHHHHHSYAPPPNRLTGKKSHWRDEDEDFVEERSNKQSAVYVEESELSEMFDKILVCGPGKPVCILNQNFPTESAKVVTAQSNGAKIRGKKSTSTSHSNDSKKETADLRTLLVLCAQAVSVDDRRTANEMLRQIREHSSPLGNGSERLAHYFANSLEARLAGTGTQIYTALSSKKTSAADMLKAYQTYMSVCPFKKAAIIFANHSMMRFTANANTIHIIDFGISYGFQWPALIHRLSLSRPGGSPKLRITGIELPQRGFRPAEGVQETGHRLARYCQRHNVPFEYNAIAQKWETIQVEDLKLRQGEYVVVNSLFRFRNLLDETVLVNSPRDAVLKLIRKINPNVFIPAILSGNYNAPFFVTRFREALFHYSAVFDMCDSKLAREDEMRLMYEKEFYGREIVNVVACEGTERVERPETYKQWQARLIRAGFRQLPLEKELMQNLKLKIENGYDKNFDVDQNGNWLLQGWKGRIVYASSLWVPSSS</sequence>
<accession>Q9XE58</accession>
<accession>Q9LNX6</accession>
<feature type="chain" id="PRO_0000350856" description="Scarecrow-like protein 14">
    <location>
        <begin position="1"/>
        <end position="769"/>
    </location>
</feature>
<feature type="domain" description="GRAS" evidence="2">
    <location>
        <begin position="384"/>
        <end position="765"/>
    </location>
</feature>
<feature type="region of interest" description="Disordered" evidence="3">
    <location>
        <begin position="1"/>
        <end position="23"/>
    </location>
</feature>
<feature type="region of interest" description="Disordered" evidence="3">
    <location>
        <begin position="128"/>
        <end position="157"/>
    </location>
</feature>
<feature type="region of interest" description="Disordered" evidence="3">
    <location>
        <begin position="279"/>
        <end position="320"/>
    </location>
</feature>
<feature type="region of interest" description="Disordered" evidence="3">
    <location>
        <begin position="364"/>
        <end position="388"/>
    </location>
</feature>
<feature type="region of interest" description="Leucine repeat I (LRI)" evidence="2">
    <location>
        <begin position="391"/>
        <end position="451"/>
    </location>
</feature>
<feature type="region of interest" description="VHIID" evidence="2">
    <location>
        <begin position="470"/>
        <end position="536"/>
    </location>
</feature>
<feature type="region of interest" description="Leucine repeat II (LRII)" evidence="2">
    <location>
        <begin position="552"/>
        <end position="584"/>
    </location>
</feature>
<feature type="region of interest" description="PFYRE" evidence="2">
    <location>
        <begin position="593"/>
        <end position="687"/>
    </location>
</feature>
<feature type="region of interest" description="SAW" evidence="2">
    <location>
        <begin position="690"/>
        <end position="765"/>
    </location>
</feature>
<feature type="short sequence motif" description="VHIID" evidence="2">
    <location>
        <begin position="501"/>
        <end position="505"/>
    </location>
</feature>
<feature type="sequence conflict" description="In Ref. 1; AAD24412." evidence="6" ref="1">
    <original>Y</original>
    <variation>D</variation>
    <location>
        <position position="127"/>
    </location>
</feature>
<feature type="sequence conflict" description="In Ref. 1; AAD24412." evidence="6" ref="1">
    <original>D</original>
    <variation>H</variation>
    <location>
        <position position="145"/>
    </location>
</feature>
<feature type="sequence conflict" description="In Ref. 1; AAD24412." evidence="6" ref="1">
    <original>EK</original>
    <variation>VF</variation>
    <location>
        <begin position="677"/>
        <end position="678"/>
    </location>
</feature>
<feature type="sequence conflict" description="In Ref. 1; AAD24412." evidence="6" ref="1">
    <original>C</original>
    <variation>S</variation>
    <location>
        <position position="691"/>
    </location>
</feature>
<feature type="sequence conflict" description="In Ref. 1; AAD24412." evidence="6" ref="1">
    <original>RP</original>
    <variation>SR</variation>
    <location>
        <begin position="699"/>
        <end position="700"/>
    </location>
</feature>